<protein>
    <recommendedName>
        <fullName evidence="1">Large ribosomal subunit protein bL35</fullName>
    </recommendedName>
    <alternativeName>
        <fullName evidence="2">50S ribosomal protein L35</fullName>
    </alternativeName>
</protein>
<keyword id="KW-1185">Reference proteome</keyword>
<keyword id="KW-0687">Ribonucleoprotein</keyword>
<keyword id="KW-0689">Ribosomal protein</keyword>
<dbReference type="EMBL" id="AL445563">
    <property type="protein sequence ID" value="CAC13433.1"/>
    <property type="molecule type" value="Genomic_DNA"/>
</dbReference>
<dbReference type="PIR" id="D90544">
    <property type="entry name" value="D90544"/>
</dbReference>
<dbReference type="RefSeq" id="WP_010925064.1">
    <property type="nucleotide sequence ID" value="NC_002771.1"/>
</dbReference>
<dbReference type="SMR" id="Q98QV1"/>
<dbReference type="STRING" id="272635.gene:17576850"/>
<dbReference type="KEGG" id="mpu:MYPU_2600"/>
<dbReference type="eggNOG" id="COG0291">
    <property type="taxonomic scope" value="Bacteria"/>
</dbReference>
<dbReference type="HOGENOM" id="CLU_169643_3_1_14"/>
<dbReference type="BioCyc" id="MPUL272635:G1GT6-261-MONOMER"/>
<dbReference type="Proteomes" id="UP000000528">
    <property type="component" value="Chromosome"/>
</dbReference>
<dbReference type="GO" id="GO:0022625">
    <property type="term" value="C:cytosolic large ribosomal subunit"/>
    <property type="evidence" value="ECO:0007669"/>
    <property type="project" value="TreeGrafter"/>
</dbReference>
<dbReference type="GO" id="GO:0003735">
    <property type="term" value="F:structural constituent of ribosome"/>
    <property type="evidence" value="ECO:0007669"/>
    <property type="project" value="InterPro"/>
</dbReference>
<dbReference type="GO" id="GO:0006412">
    <property type="term" value="P:translation"/>
    <property type="evidence" value="ECO:0007669"/>
    <property type="project" value="UniProtKB-UniRule"/>
</dbReference>
<dbReference type="FunFam" id="4.10.410.60:FF:000001">
    <property type="entry name" value="50S ribosomal protein L35"/>
    <property type="match status" value="1"/>
</dbReference>
<dbReference type="Gene3D" id="4.10.410.60">
    <property type="match status" value="1"/>
</dbReference>
<dbReference type="HAMAP" id="MF_00514">
    <property type="entry name" value="Ribosomal_bL35"/>
    <property type="match status" value="1"/>
</dbReference>
<dbReference type="InterPro" id="IPR001706">
    <property type="entry name" value="Ribosomal_bL35"/>
</dbReference>
<dbReference type="InterPro" id="IPR021137">
    <property type="entry name" value="Ribosomal_bL35-like"/>
</dbReference>
<dbReference type="InterPro" id="IPR018265">
    <property type="entry name" value="Ribosomal_bL35_CS"/>
</dbReference>
<dbReference type="InterPro" id="IPR037229">
    <property type="entry name" value="Ribosomal_bL35_sf"/>
</dbReference>
<dbReference type="NCBIfam" id="TIGR00001">
    <property type="entry name" value="rpmI_bact"/>
    <property type="match status" value="1"/>
</dbReference>
<dbReference type="PANTHER" id="PTHR33343">
    <property type="entry name" value="54S RIBOSOMAL PROTEIN BL35M"/>
    <property type="match status" value="1"/>
</dbReference>
<dbReference type="PANTHER" id="PTHR33343:SF1">
    <property type="entry name" value="LARGE RIBOSOMAL SUBUNIT PROTEIN BL35M"/>
    <property type="match status" value="1"/>
</dbReference>
<dbReference type="Pfam" id="PF01632">
    <property type="entry name" value="Ribosomal_L35p"/>
    <property type="match status" value="1"/>
</dbReference>
<dbReference type="PRINTS" id="PR00064">
    <property type="entry name" value="RIBOSOMALL35"/>
</dbReference>
<dbReference type="SUPFAM" id="SSF143034">
    <property type="entry name" value="L35p-like"/>
    <property type="match status" value="1"/>
</dbReference>
<dbReference type="PROSITE" id="PS00936">
    <property type="entry name" value="RIBOSOMAL_L35"/>
    <property type="match status" value="1"/>
</dbReference>
<gene>
    <name evidence="1" type="primary">rpmI</name>
    <name type="ordered locus">MYPU_2600</name>
</gene>
<sequence>MPKMKSKSALKKRIKITGTGKIKRHQAFRSHLAQNKTTKQKRQSRNAELMHKSDYKRFKALIQK</sequence>
<name>RL35_MYCPU</name>
<organism>
    <name type="scientific">Mycoplasmopsis pulmonis (strain UAB CTIP)</name>
    <name type="common">Mycoplasma pulmonis</name>
    <dbReference type="NCBI Taxonomy" id="272635"/>
    <lineage>
        <taxon>Bacteria</taxon>
        <taxon>Bacillati</taxon>
        <taxon>Mycoplasmatota</taxon>
        <taxon>Mycoplasmoidales</taxon>
        <taxon>Metamycoplasmataceae</taxon>
        <taxon>Mycoplasmopsis</taxon>
    </lineage>
</organism>
<feature type="chain" id="PRO_0000177385" description="Large ribosomal subunit protein bL35">
    <location>
        <begin position="1"/>
        <end position="64"/>
    </location>
</feature>
<proteinExistence type="inferred from homology"/>
<reference key="1">
    <citation type="journal article" date="2001" name="Nucleic Acids Res.">
        <title>The complete genome sequence of the murine respiratory pathogen Mycoplasma pulmonis.</title>
        <authorList>
            <person name="Chambaud I."/>
            <person name="Heilig R."/>
            <person name="Ferris S."/>
            <person name="Barbe V."/>
            <person name="Samson D."/>
            <person name="Galisson F."/>
            <person name="Moszer I."/>
            <person name="Dybvig K."/>
            <person name="Wroblewski H."/>
            <person name="Viari A."/>
            <person name="Rocha E.P.C."/>
            <person name="Blanchard A."/>
        </authorList>
    </citation>
    <scope>NUCLEOTIDE SEQUENCE [LARGE SCALE GENOMIC DNA]</scope>
    <source>
        <strain>UAB CTIP</strain>
    </source>
</reference>
<accession>Q98QV1</accession>
<evidence type="ECO:0000255" key="1">
    <source>
        <dbReference type="HAMAP-Rule" id="MF_00514"/>
    </source>
</evidence>
<evidence type="ECO:0000305" key="2"/>
<comment type="similarity">
    <text evidence="1">Belongs to the bacterial ribosomal protein bL35 family.</text>
</comment>